<sequence length="132" mass="14710">MRDSVLSVIFALALFLECYTPSMAIPMGKMEDTALEQDTLDSLLNEEVADKNPDSVRSGSSKIIVLADSGMWKNLNRGLPLYKLKAAAAGLDRALTLDRREADQDLSPSISIVRRDTMRCMVGRVYRPCWEV</sequence>
<gene>
    <name type="primary">mch2</name>
</gene>
<reference key="1">
    <citation type="journal article" date="1995" name="Neuroendocrinology">
        <title>Cloning and expression of melanin-concentrating hormone genes in the rainbow trout brain.</title>
        <authorList>
            <person name="Baker B."/>
            <person name="Levy A."/>
            <person name="Hall L."/>
            <person name="Lightman S."/>
        </authorList>
    </citation>
    <scope>NUCLEOTIDE SEQUENCE [GENOMIC DNA]</scope>
</reference>
<name>MCH2_ONCMY</name>
<accession>P69157</accession>
<accession>P01208</accession>
<accession>P19714</accession>
<proteinExistence type="evidence at transcript level"/>
<protein>
    <recommendedName>
        <fullName>Pro-MCH 2</fullName>
    </recommendedName>
    <component>
        <recommendedName>
            <fullName>Neuropeptide-glutamic acid-valine</fullName>
        </recommendedName>
        <alternativeName>
            <fullName>Neuropeptide E-V</fullName>
            <shortName>NEV</shortName>
        </alternativeName>
    </component>
    <component>
        <recommendedName>
            <fullName>Melanin-concentrating hormone</fullName>
            <shortName>MCH</shortName>
        </recommendedName>
    </component>
</protein>
<dbReference type="EMBL" id="X73838">
    <property type="protein sequence ID" value="CAA52060.1"/>
    <property type="molecule type" value="Genomic_DNA"/>
</dbReference>
<dbReference type="PIR" id="S34654">
    <property type="entry name" value="S34654"/>
</dbReference>
<dbReference type="Ensembl" id="ENSOMYT00000115374.2">
    <property type="protein sequence ID" value="ENSOMYP00000106480.1"/>
    <property type="gene ID" value="ENSOMYG00000047657.2"/>
</dbReference>
<dbReference type="GeneTree" id="ENSGT00390000004984"/>
<dbReference type="OrthoDB" id="8639774at2759"/>
<dbReference type="Proteomes" id="UP000694395">
    <property type="component" value="Chromosome Y"/>
</dbReference>
<dbReference type="GO" id="GO:0045202">
    <property type="term" value="C:synapse"/>
    <property type="evidence" value="ECO:0007669"/>
    <property type="project" value="GOC"/>
</dbReference>
<dbReference type="GO" id="GO:0030354">
    <property type="term" value="F:melanin-concentrating hormone activity"/>
    <property type="evidence" value="ECO:0007669"/>
    <property type="project" value="InterPro"/>
</dbReference>
<dbReference type="GO" id="GO:0031777">
    <property type="term" value="F:type 1 melanin-concentrating hormone receptor binding"/>
    <property type="evidence" value="ECO:0007669"/>
    <property type="project" value="TreeGrafter"/>
</dbReference>
<dbReference type="GO" id="GO:0007268">
    <property type="term" value="P:chemical synaptic transmission"/>
    <property type="evidence" value="ECO:0007669"/>
    <property type="project" value="InterPro"/>
</dbReference>
<dbReference type="GO" id="GO:0007218">
    <property type="term" value="P:neuropeptide signaling pathway"/>
    <property type="evidence" value="ECO:0007669"/>
    <property type="project" value="UniProtKB-KW"/>
</dbReference>
<dbReference type="InterPro" id="IPR005456">
    <property type="entry name" value="Prepro-melanin_conc_hormone"/>
</dbReference>
<dbReference type="PANTHER" id="PTHR12091">
    <property type="entry name" value="MELANIN-CONCENTRATING HORMONE"/>
    <property type="match status" value="1"/>
</dbReference>
<dbReference type="PANTHER" id="PTHR12091:SF0">
    <property type="entry name" value="PRO-MCH"/>
    <property type="match status" value="1"/>
</dbReference>
<dbReference type="Pfam" id="PF05824">
    <property type="entry name" value="Pro-MCH"/>
    <property type="match status" value="1"/>
</dbReference>
<dbReference type="PRINTS" id="PR01641">
    <property type="entry name" value="PROMCHFAMILY"/>
</dbReference>
<keyword id="KW-0165">Cleavage on pair of basic residues</keyword>
<keyword id="KW-1015">Disulfide bond</keyword>
<keyword id="KW-0372">Hormone</keyword>
<keyword id="KW-0527">Neuropeptide</keyword>
<keyword id="KW-0732">Signal</keyword>
<feature type="signal peptide" evidence="2">
    <location>
        <begin position="1"/>
        <end position="24"/>
    </location>
</feature>
<feature type="chain" id="PRO_0000019135" description="Pro-MCH 2">
    <location>
        <begin position="25"/>
        <end position="132"/>
    </location>
</feature>
<feature type="peptide" id="PRO_0000019136" description="Neuropeptide-glutamic acid-valine" evidence="2">
    <location>
        <begin position="101"/>
        <end position="113"/>
    </location>
</feature>
<feature type="peptide" id="PRO_0000019137" description="Melanin-concentrating hormone">
    <location>
        <begin position="116"/>
        <end position="132"/>
    </location>
</feature>
<feature type="disulfide bond" evidence="1">
    <location>
        <begin position="120"/>
        <end position="129"/>
    </location>
</feature>
<organism>
    <name type="scientific">Oncorhynchus mykiss</name>
    <name type="common">Rainbow trout</name>
    <name type="synonym">Salmo gairdneri</name>
    <dbReference type="NCBI Taxonomy" id="8022"/>
    <lineage>
        <taxon>Eukaryota</taxon>
        <taxon>Metazoa</taxon>
        <taxon>Chordata</taxon>
        <taxon>Craniata</taxon>
        <taxon>Vertebrata</taxon>
        <taxon>Euteleostomi</taxon>
        <taxon>Actinopterygii</taxon>
        <taxon>Neopterygii</taxon>
        <taxon>Teleostei</taxon>
        <taxon>Protacanthopterygii</taxon>
        <taxon>Salmoniformes</taxon>
        <taxon>Salmonidae</taxon>
        <taxon>Salmoninae</taxon>
        <taxon>Oncorhynchus</taxon>
    </lineage>
</organism>
<comment type="function">
    <text>Plays a role in skin pigmentation by antagonizing the action of melanotropin alpha. Induces melanin concentration within the melanophores. May participate in the control of the hypothalamo-pituitary adrenal gland axis by inhibiting the release of ACTH.</text>
</comment>
<comment type="tissue specificity">
    <text>Pituitary gland. Produced in neurons of lateral basal hypothalamus which project both to the brain and to the neural lobe of the pituitary gland from where MCH is released.</text>
</comment>
<comment type="similarity">
    <text evidence="3">Belongs to the melanin-concentrating hormone family.</text>
</comment>
<evidence type="ECO:0000250" key="1"/>
<evidence type="ECO:0000255" key="2"/>
<evidence type="ECO:0000305" key="3"/>